<protein>
    <recommendedName>
        <fullName evidence="1">Large ribosomal subunit protein uL2</fullName>
    </recommendedName>
    <alternativeName>
        <fullName evidence="3">50S ribosomal protein L2</fullName>
    </alternativeName>
</protein>
<comment type="function">
    <text evidence="1">One of the primary rRNA binding proteins. Required for association of the 30S and 50S subunits to form the 70S ribosome, for tRNA binding and peptide bond formation. It has been suggested to have peptidyltransferase activity; this is somewhat controversial. Makes several contacts with the 16S rRNA in the 70S ribosome.</text>
</comment>
<comment type="subunit">
    <text evidence="1">Part of the 50S ribosomal subunit. Forms a bridge to the 30S subunit in the 70S ribosome.</text>
</comment>
<comment type="similarity">
    <text evidence="1">Belongs to the universal ribosomal protein uL2 family.</text>
</comment>
<comment type="sequence caution" evidence="3">
    <conflict type="erroneous initiation">
        <sequence resource="EMBL-CDS" id="BAC63140"/>
    </conflict>
</comment>
<proteinExistence type="inferred from homology"/>
<dbReference type="EMBL" id="BA000034">
    <property type="protein sequence ID" value="BAC63140.1"/>
    <property type="status" value="ALT_INIT"/>
    <property type="molecule type" value="Genomic_DNA"/>
</dbReference>
<dbReference type="RefSeq" id="WP_002986654.1">
    <property type="nucleotide sequence ID" value="NC_004606.1"/>
</dbReference>
<dbReference type="SMR" id="P0DE35"/>
<dbReference type="GeneID" id="83689570"/>
<dbReference type="KEGG" id="sps:SPs0045"/>
<dbReference type="HOGENOM" id="CLU_036235_2_1_9"/>
<dbReference type="GO" id="GO:0015934">
    <property type="term" value="C:large ribosomal subunit"/>
    <property type="evidence" value="ECO:0007669"/>
    <property type="project" value="InterPro"/>
</dbReference>
<dbReference type="GO" id="GO:0019843">
    <property type="term" value="F:rRNA binding"/>
    <property type="evidence" value="ECO:0007669"/>
    <property type="project" value="UniProtKB-UniRule"/>
</dbReference>
<dbReference type="GO" id="GO:0003735">
    <property type="term" value="F:structural constituent of ribosome"/>
    <property type="evidence" value="ECO:0007669"/>
    <property type="project" value="InterPro"/>
</dbReference>
<dbReference type="GO" id="GO:0016740">
    <property type="term" value="F:transferase activity"/>
    <property type="evidence" value="ECO:0007669"/>
    <property type="project" value="InterPro"/>
</dbReference>
<dbReference type="GO" id="GO:0002181">
    <property type="term" value="P:cytoplasmic translation"/>
    <property type="evidence" value="ECO:0007669"/>
    <property type="project" value="TreeGrafter"/>
</dbReference>
<dbReference type="FunFam" id="2.30.30.30:FF:000001">
    <property type="entry name" value="50S ribosomal protein L2"/>
    <property type="match status" value="1"/>
</dbReference>
<dbReference type="FunFam" id="2.40.50.140:FF:000003">
    <property type="entry name" value="50S ribosomal protein L2"/>
    <property type="match status" value="1"/>
</dbReference>
<dbReference type="FunFam" id="4.10.950.10:FF:000001">
    <property type="entry name" value="50S ribosomal protein L2"/>
    <property type="match status" value="1"/>
</dbReference>
<dbReference type="Gene3D" id="2.30.30.30">
    <property type="match status" value="1"/>
</dbReference>
<dbReference type="Gene3D" id="2.40.50.140">
    <property type="entry name" value="Nucleic acid-binding proteins"/>
    <property type="match status" value="1"/>
</dbReference>
<dbReference type="Gene3D" id="4.10.950.10">
    <property type="entry name" value="Ribosomal protein L2, domain 3"/>
    <property type="match status" value="1"/>
</dbReference>
<dbReference type="HAMAP" id="MF_01320_B">
    <property type="entry name" value="Ribosomal_uL2_B"/>
    <property type="match status" value="1"/>
</dbReference>
<dbReference type="InterPro" id="IPR012340">
    <property type="entry name" value="NA-bd_OB-fold"/>
</dbReference>
<dbReference type="InterPro" id="IPR014722">
    <property type="entry name" value="Rib_uL2_dom2"/>
</dbReference>
<dbReference type="InterPro" id="IPR002171">
    <property type="entry name" value="Ribosomal_uL2"/>
</dbReference>
<dbReference type="InterPro" id="IPR005880">
    <property type="entry name" value="Ribosomal_uL2_bac/org-type"/>
</dbReference>
<dbReference type="InterPro" id="IPR022669">
    <property type="entry name" value="Ribosomal_uL2_C"/>
</dbReference>
<dbReference type="InterPro" id="IPR022671">
    <property type="entry name" value="Ribosomal_uL2_CS"/>
</dbReference>
<dbReference type="InterPro" id="IPR014726">
    <property type="entry name" value="Ribosomal_uL2_dom3"/>
</dbReference>
<dbReference type="InterPro" id="IPR022666">
    <property type="entry name" value="Ribosomal_uL2_RNA-bd_dom"/>
</dbReference>
<dbReference type="InterPro" id="IPR008991">
    <property type="entry name" value="Translation_prot_SH3-like_sf"/>
</dbReference>
<dbReference type="NCBIfam" id="TIGR01171">
    <property type="entry name" value="rplB_bact"/>
    <property type="match status" value="1"/>
</dbReference>
<dbReference type="PANTHER" id="PTHR13691:SF5">
    <property type="entry name" value="LARGE RIBOSOMAL SUBUNIT PROTEIN UL2M"/>
    <property type="match status" value="1"/>
</dbReference>
<dbReference type="PANTHER" id="PTHR13691">
    <property type="entry name" value="RIBOSOMAL PROTEIN L2"/>
    <property type="match status" value="1"/>
</dbReference>
<dbReference type="Pfam" id="PF00181">
    <property type="entry name" value="Ribosomal_L2"/>
    <property type="match status" value="1"/>
</dbReference>
<dbReference type="Pfam" id="PF03947">
    <property type="entry name" value="Ribosomal_L2_C"/>
    <property type="match status" value="1"/>
</dbReference>
<dbReference type="PIRSF" id="PIRSF002158">
    <property type="entry name" value="Ribosomal_L2"/>
    <property type="match status" value="1"/>
</dbReference>
<dbReference type="SMART" id="SM01383">
    <property type="entry name" value="Ribosomal_L2"/>
    <property type="match status" value="1"/>
</dbReference>
<dbReference type="SMART" id="SM01382">
    <property type="entry name" value="Ribosomal_L2_C"/>
    <property type="match status" value="1"/>
</dbReference>
<dbReference type="SUPFAM" id="SSF50249">
    <property type="entry name" value="Nucleic acid-binding proteins"/>
    <property type="match status" value="1"/>
</dbReference>
<dbReference type="SUPFAM" id="SSF50104">
    <property type="entry name" value="Translation proteins SH3-like domain"/>
    <property type="match status" value="1"/>
</dbReference>
<dbReference type="PROSITE" id="PS00467">
    <property type="entry name" value="RIBOSOMAL_L2"/>
    <property type="match status" value="1"/>
</dbReference>
<accession>P0DE35</accession>
<accession>Q879R0</accession>
<accession>Q9A1X1</accession>
<sequence length="277" mass="29876">MGIKVYKPTTNGRRNMTSLDFAEITTSTPEKSLLVSLKSKAGRNNNGRITVRHQGGGHKRHYRLIDFKRNKDGVEAVVKTIEYDPNRTANIALVHYTDGVKAYIIAPKGLEVGQRIVSGPDADIKVGNALPLANIPVGTVVHNIELKPGKGGELVRAAGASAQVLGQEGKYVLVRLQSGEVRMILGTCRATIGTVGNEQQSLVNIGKAGRSRWKGIRPTVRGSVMNPNDHPHGGGEGKAPVGRKAPSTPWGKPALGLKTRNKKAKSDKLIVRRRNEK</sequence>
<evidence type="ECO:0000255" key="1">
    <source>
        <dbReference type="HAMAP-Rule" id="MF_01320"/>
    </source>
</evidence>
<evidence type="ECO:0000256" key="2">
    <source>
        <dbReference type="SAM" id="MobiDB-lite"/>
    </source>
</evidence>
<evidence type="ECO:0000305" key="3"/>
<gene>
    <name evidence="1" type="primary">rplB</name>
    <name type="ordered locus">SPs0045</name>
</gene>
<keyword id="KW-0687">Ribonucleoprotein</keyword>
<keyword id="KW-0689">Ribosomal protein</keyword>
<keyword id="KW-0694">RNA-binding</keyword>
<keyword id="KW-0699">rRNA-binding</keyword>
<feature type="chain" id="PRO_0000411507" description="Large ribosomal subunit protein uL2">
    <location>
        <begin position="1"/>
        <end position="277"/>
    </location>
</feature>
<feature type="region of interest" description="Disordered" evidence="2">
    <location>
        <begin position="219"/>
        <end position="277"/>
    </location>
</feature>
<feature type="compositionally biased region" description="Basic and acidic residues" evidence="2">
    <location>
        <begin position="264"/>
        <end position="277"/>
    </location>
</feature>
<reference key="1">
    <citation type="journal article" date="2003" name="Genome Res.">
        <title>Genome sequence of an M3 strain of Streptococcus pyogenes reveals a large-scale genomic rearrangement in invasive strains and new insights into phage evolution.</title>
        <authorList>
            <person name="Nakagawa I."/>
            <person name="Kurokawa K."/>
            <person name="Yamashita A."/>
            <person name="Nakata M."/>
            <person name="Tomiyasu Y."/>
            <person name="Okahashi N."/>
            <person name="Kawabata S."/>
            <person name="Yamazaki K."/>
            <person name="Shiba T."/>
            <person name="Yasunaga T."/>
            <person name="Hayashi H."/>
            <person name="Hattori M."/>
            <person name="Hamada S."/>
        </authorList>
    </citation>
    <scope>NUCLEOTIDE SEQUENCE [LARGE SCALE GENOMIC DNA]</scope>
    <source>
        <strain>SSI-1</strain>
    </source>
</reference>
<name>RL2_STRPQ</name>
<organism>
    <name type="scientific">Streptococcus pyogenes serotype M3 (strain SSI-1)</name>
    <dbReference type="NCBI Taxonomy" id="193567"/>
    <lineage>
        <taxon>Bacteria</taxon>
        <taxon>Bacillati</taxon>
        <taxon>Bacillota</taxon>
        <taxon>Bacilli</taxon>
        <taxon>Lactobacillales</taxon>
        <taxon>Streptococcaceae</taxon>
        <taxon>Streptococcus</taxon>
    </lineage>
</organism>